<comment type="function">
    <text evidence="3">Purine salvage pathway enzyme that catalyzes the transfer of the ribosyl-5-phosphate group from 5-phospho-alpha-D-ribose 1-diphosphate (PRPP) to the N9 position of the 6-oxopurines hypoxanthine and guanine to form the corresponding ribonucleotides IMP (inosine 5'-monophosphate) and GMP (guanosine 5'-monophosphate), with the release of PPi.</text>
</comment>
<comment type="catalytic activity">
    <reaction evidence="3">
        <text>IMP + diphosphate = hypoxanthine + 5-phospho-alpha-D-ribose 1-diphosphate</text>
        <dbReference type="Rhea" id="RHEA:17973"/>
        <dbReference type="ChEBI" id="CHEBI:17368"/>
        <dbReference type="ChEBI" id="CHEBI:33019"/>
        <dbReference type="ChEBI" id="CHEBI:58017"/>
        <dbReference type="ChEBI" id="CHEBI:58053"/>
        <dbReference type="EC" id="2.4.2.8"/>
    </reaction>
    <physiologicalReaction direction="right-to-left" evidence="3">
        <dbReference type="Rhea" id="RHEA:17975"/>
    </physiologicalReaction>
</comment>
<comment type="catalytic activity">
    <reaction evidence="3">
        <text>GMP + diphosphate = guanine + 5-phospho-alpha-D-ribose 1-diphosphate</text>
        <dbReference type="Rhea" id="RHEA:25424"/>
        <dbReference type="ChEBI" id="CHEBI:16235"/>
        <dbReference type="ChEBI" id="CHEBI:33019"/>
        <dbReference type="ChEBI" id="CHEBI:58017"/>
        <dbReference type="ChEBI" id="CHEBI:58115"/>
        <dbReference type="EC" id="2.4.2.8"/>
    </reaction>
    <physiologicalReaction direction="right-to-left" evidence="3">
        <dbReference type="Rhea" id="RHEA:25426"/>
    </physiologicalReaction>
</comment>
<comment type="cofactor">
    <cofactor evidence="3">
        <name>Mg(2+)</name>
        <dbReference type="ChEBI" id="CHEBI:18420"/>
    </cofactor>
</comment>
<comment type="pathway">
    <text evidence="3">Purine metabolism; IMP biosynthesis via salvage pathway; IMP from hypoxanthine: step 1/1.</text>
</comment>
<comment type="pathway">
    <text evidence="3">Purine metabolism; GMP biosynthesis via salvage pathway; GMP from guanine: step 1/1.</text>
</comment>
<comment type="subcellular location">
    <subcellularLocation>
        <location evidence="1">Cytoplasm</location>
    </subcellularLocation>
</comment>
<comment type="similarity">
    <text evidence="4">Belongs to the purine/pyrimidine phosphoribosyltransferase family.</text>
</comment>
<feature type="chain" id="PRO_0000139616" description="Hypoxanthine-guanine phosphoribosyltransferase">
    <location>
        <begin position="1"/>
        <end position="179"/>
    </location>
</feature>
<feature type="active site" description="Proton acceptor" evidence="2">
    <location>
        <position position="102"/>
    </location>
</feature>
<feature type="binding site" evidence="3">
    <location>
        <position position="42"/>
    </location>
    <ligand>
        <name>diphosphate</name>
        <dbReference type="ChEBI" id="CHEBI:33019"/>
    </ligand>
</feature>
<feature type="binding site" evidence="3">
    <location>
        <position position="43"/>
    </location>
    <ligand>
        <name>diphosphate</name>
        <dbReference type="ChEBI" id="CHEBI:33019"/>
    </ligand>
</feature>
<feature type="binding site" evidence="3">
    <location>
        <position position="98"/>
    </location>
    <ligand>
        <name>Mg(2+)</name>
        <dbReference type="ChEBI" id="CHEBI:18420"/>
    </ligand>
</feature>
<feature type="binding site" evidence="3">
    <location>
        <position position="99"/>
    </location>
    <ligand>
        <name>Mg(2+)</name>
        <dbReference type="ChEBI" id="CHEBI:18420"/>
    </ligand>
</feature>
<feature type="binding site" evidence="3">
    <location>
        <position position="130"/>
    </location>
    <ligand>
        <name>GMP</name>
        <dbReference type="ChEBI" id="CHEBI:58115"/>
    </ligand>
</feature>
<feature type="binding site" evidence="3">
    <location>
        <begin position="151"/>
        <end position="152"/>
    </location>
    <ligand>
        <name>GMP</name>
        <dbReference type="ChEBI" id="CHEBI:58115"/>
    </ligand>
</feature>
<feature type="binding site" evidence="3">
    <location>
        <position position="158"/>
    </location>
    <ligand>
        <name>GMP</name>
        <dbReference type="ChEBI" id="CHEBI:58115"/>
    </ligand>
</feature>
<feature type="binding site" evidence="3">
    <location>
        <position position="164"/>
    </location>
    <ligand>
        <name>diphosphate</name>
        <dbReference type="ChEBI" id="CHEBI:33019"/>
    </ligand>
</feature>
<evidence type="ECO:0000250" key="1"/>
<evidence type="ECO:0000250" key="2">
    <source>
        <dbReference type="UniProtKB" id="P0A9M2"/>
    </source>
</evidence>
<evidence type="ECO:0000250" key="3">
    <source>
        <dbReference type="UniProtKB" id="P9WHQ9"/>
    </source>
</evidence>
<evidence type="ECO:0000305" key="4"/>
<proteinExistence type="inferred from homology"/>
<dbReference type="EC" id="2.4.2.8" evidence="3"/>
<dbReference type="EMBL" id="BX571857">
    <property type="protein sequence ID" value="CAG42242.1"/>
    <property type="molecule type" value="Genomic_DNA"/>
</dbReference>
<dbReference type="RefSeq" id="WP_000551283.1">
    <property type="nucleotide sequence ID" value="NC_002953.3"/>
</dbReference>
<dbReference type="SMR" id="Q6GBX8"/>
<dbReference type="KEGG" id="sas:SAS0467"/>
<dbReference type="HOGENOM" id="CLU_073615_0_0_9"/>
<dbReference type="UniPathway" id="UPA00591">
    <property type="reaction ID" value="UER00648"/>
</dbReference>
<dbReference type="UniPathway" id="UPA00909">
    <property type="reaction ID" value="UER00887"/>
</dbReference>
<dbReference type="GO" id="GO:0005829">
    <property type="term" value="C:cytosol"/>
    <property type="evidence" value="ECO:0007669"/>
    <property type="project" value="TreeGrafter"/>
</dbReference>
<dbReference type="GO" id="GO:0052657">
    <property type="term" value="F:guanine phosphoribosyltransferase activity"/>
    <property type="evidence" value="ECO:0007669"/>
    <property type="project" value="RHEA"/>
</dbReference>
<dbReference type="GO" id="GO:0004422">
    <property type="term" value="F:hypoxanthine phosphoribosyltransferase activity"/>
    <property type="evidence" value="ECO:0007669"/>
    <property type="project" value="InterPro"/>
</dbReference>
<dbReference type="GO" id="GO:0000287">
    <property type="term" value="F:magnesium ion binding"/>
    <property type="evidence" value="ECO:0007669"/>
    <property type="project" value="TreeGrafter"/>
</dbReference>
<dbReference type="GO" id="GO:0000166">
    <property type="term" value="F:nucleotide binding"/>
    <property type="evidence" value="ECO:0007669"/>
    <property type="project" value="UniProtKB-KW"/>
</dbReference>
<dbReference type="GO" id="GO:0032263">
    <property type="term" value="P:GMP salvage"/>
    <property type="evidence" value="ECO:0007669"/>
    <property type="project" value="UniProtKB-UniPathway"/>
</dbReference>
<dbReference type="GO" id="GO:0006178">
    <property type="term" value="P:guanine salvage"/>
    <property type="evidence" value="ECO:0007669"/>
    <property type="project" value="TreeGrafter"/>
</dbReference>
<dbReference type="GO" id="GO:0046100">
    <property type="term" value="P:hypoxanthine metabolic process"/>
    <property type="evidence" value="ECO:0007669"/>
    <property type="project" value="TreeGrafter"/>
</dbReference>
<dbReference type="GO" id="GO:0032264">
    <property type="term" value="P:IMP salvage"/>
    <property type="evidence" value="ECO:0007669"/>
    <property type="project" value="UniProtKB-UniPathway"/>
</dbReference>
<dbReference type="GO" id="GO:0006166">
    <property type="term" value="P:purine ribonucleoside salvage"/>
    <property type="evidence" value="ECO:0007669"/>
    <property type="project" value="UniProtKB-KW"/>
</dbReference>
<dbReference type="CDD" id="cd06223">
    <property type="entry name" value="PRTases_typeI"/>
    <property type="match status" value="1"/>
</dbReference>
<dbReference type="FunFam" id="3.40.50.2020:FF:000006">
    <property type="entry name" value="Hypoxanthine phosphoribosyltransferase"/>
    <property type="match status" value="1"/>
</dbReference>
<dbReference type="Gene3D" id="3.40.50.2020">
    <property type="match status" value="1"/>
</dbReference>
<dbReference type="InterPro" id="IPR050408">
    <property type="entry name" value="HGPRT"/>
</dbReference>
<dbReference type="InterPro" id="IPR005904">
    <property type="entry name" value="Hxn_phspho_trans"/>
</dbReference>
<dbReference type="InterPro" id="IPR000836">
    <property type="entry name" value="PRibTrfase_dom"/>
</dbReference>
<dbReference type="InterPro" id="IPR029057">
    <property type="entry name" value="PRTase-like"/>
</dbReference>
<dbReference type="NCBIfam" id="TIGR01203">
    <property type="entry name" value="HGPRTase"/>
    <property type="match status" value="1"/>
</dbReference>
<dbReference type="PANTHER" id="PTHR43340:SF1">
    <property type="entry name" value="HYPOXANTHINE PHOSPHORIBOSYLTRANSFERASE"/>
    <property type="match status" value="1"/>
</dbReference>
<dbReference type="PANTHER" id="PTHR43340">
    <property type="entry name" value="HYPOXANTHINE-GUANINE PHOSPHORIBOSYLTRANSFERASE"/>
    <property type="match status" value="1"/>
</dbReference>
<dbReference type="Pfam" id="PF00156">
    <property type="entry name" value="Pribosyltran"/>
    <property type="match status" value="1"/>
</dbReference>
<dbReference type="SUPFAM" id="SSF53271">
    <property type="entry name" value="PRTase-like"/>
    <property type="match status" value="1"/>
</dbReference>
<name>HGPRT_STAAS</name>
<gene>
    <name type="primary">hpt</name>
    <name type="ordered locus">SAS0467</name>
</gene>
<sequence length="179" mass="20154">MHNDLKEVLLTEEDIQNICKELGAQLTKDYQGKPLVCVGILKGSAMFMSDLIKRIDTHLSIDFMDVSSYHGGTESTGEVQIIKDLGSSIENKDVLIIEDILETGTTLKSITELLQSRKVNSLEIVTLLDKPNRRKADIEAKYVGKKIPDEFVVGYGLDYRELYRNLPYIGTLKPEVYSN</sequence>
<protein>
    <recommendedName>
        <fullName>Hypoxanthine-guanine phosphoribosyltransferase</fullName>
        <shortName>HGPRT</shortName>
        <shortName>HGPRTase</shortName>
        <ecNumber evidence="3">2.4.2.8</ecNumber>
    </recommendedName>
</protein>
<organism>
    <name type="scientific">Staphylococcus aureus (strain MSSA476)</name>
    <dbReference type="NCBI Taxonomy" id="282459"/>
    <lineage>
        <taxon>Bacteria</taxon>
        <taxon>Bacillati</taxon>
        <taxon>Bacillota</taxon>
        <taxon>Bacilli</taxon>
        <taxon>Bacillales</taxon>
        <taxon>Staphylococcaceae</taxon>
        <taxon>Staphylococcus</taxon>
    </lineage>
</organism>
<accession>Q6GBX8</accession>
<keyword id="KW-0963">Cytoplasm</keyword>
<keyword id="KW-0328">Glycosyltransferase</keyword>
<keyword id="KW-0460">Magnesium</keyword>
<keyword id="KW-0479">Metal-binding</keyword>
<keyword id="KW-0547">Nucleotide-binding</keyword>
<keyword id="KW-0660">Purine salvage</keyword>
<keyword id="KW-0808">Transferase</keyword>
<reference key="1">
    <citation type="journal article" date="2004" name="Proc. Natl. Acad. Sci. U.S.A.">
        <title>Complete genomes of two clinical Staphylococcus aureus strains: evidence for the rapid evolution of virulence and drug resistance.</title>
        <authorList>
            <person name="Holden M.T.G."/>
            <person name="Feil E.J."/>
            <person name="Lindsay J.A."/>
            <person name="Peacock S.J."/>
            <person name="Day N.P.J."/>
            <person name="Enright M.C."/>
            <person name="Foster T.J."/>
            <person name="Moore C.E."/>
            <person name="Hurst L."/>
            <person name="Atkin R."/>
            <person name="Barron A."/>
            <person name="Bason N."/>
            <person name="Bentley S.D."/>
            <person name="Chillingworth C."/>
            <person name="Chillingworth T."/>
            <person name="Churcher C."/>
            <person name="Clark L."/>
            <person name="Corton C."/>
            <person name="Cronin A."/>
            <person name="Doggett J."/>
            <person name="Dowd L."/>
            <person name="Feltwell T."/>
            <person name="Hance Z."/>
            <person name="Harris B."/>
            <person name="Hauser H."/>
            <person name="Holroyd S."/>
            <person name="Jagels K."/>
            <person name="James K.D."/>
            <person name="Lennard N."/>
            <person name="Line A."/>
            <person name="Mayes R."/>
            <person name="Moule S."/>
            <person name="Mungall K."/>
            <person name="Ormond D."/>
            <person name="Quail M.A."/>
            <person name="Rabbinowitsch E."/>
            <person name="Rutherford K.M."/>
            <person name="Sanders M."/>
            <person name="Sharp S."/>
            <person name="Simmonds M."/>
            <person name="Stevens K."/>
            <person name="Whitehead S."/>
            <person name="Barrell B.G."/>
            <person name="Spratt B.G."/>
            <person name="Parkhill J."/>
        </authorList>
    </citation>
    <scope>NUCLEOTIDE SEQUENCE [LARGE SCALE GENOMIC DNA]</scope>
    <source>
        <strain>MSSA476</strain>
    </source>
</reference>